<dbReference type="EC" id="7.3.2.1" evidence="1"/>
<dbReference type="EMBL" id="CP000453">
    <property type="protein sequence ID" value="ABI56486.1"/>
    <property type="molecule type" value="Genomic_DNA"/>
</dbReference>
<dbReference type="SMR" id="Q0A9K1"/>
<dbReference type="KEGG" id="aeh:Mlg_1137"/>
<dbReference type="eggNOG" id="COG1117">
    <property type="taxonomic scope" value="Bacteria"/>
</dbReference>
<dbReference type="HOGENOM" id="CLU_000604_1_22_6"/>
<dbReference type="Proteomes" id="UP000001962">
    <property type="component" value="Chromosome"/>
</dbReference>
<dbReference type="GO" id="GO:0005886">
    <property type="term" value="C:plasma membrane"/>
    <property type="evidence" value="ECO:0007669"/>
    <property type="project" value="UniProtKB-SubCell"/>
</dbReference>
<dbReference type="GO" id="GO:0005524">
    <property type="term" value="F:ATP binding"/>
    <property type="evidence" value="ECO:0007669"/>
    <property type="project" value="UniProtKB-KW"/>
</dbReference>
<dbReference type="GO" id="GO:0016887">
    <property type="term" value="F:ATP hydrolysis activity"/>
    <property type="evidence" value="ECO:0007669"/>
    <property type="project" value="InterPro"/>
</dbReference>
<dbReference type="GO" id="GO:0015415">
    <property type="term" value="F:ATPase-coupled phosphate ion transmembrane transporter activity"/>
    <property type="evidence" value="ECO:0007669"/>
    <property type="project" value="UniProtKB-EC"/>
</dbReference>
<dbReference type="GO" id="GO:0035435">
    <property type="term" value="P:phosphate ion transmembrane transport"/>
    <property type="evidence" value="ECO:0007669"/>
    <property type="project" value="InterPro"/>
</dbReference>
<dbReference type="CDD" id="cd03260">
    <property type="entry name" value="ABC_PstB_phosphate_transporter"/>
    <property type="match status" value="1"/>
</dbReference>
<dbReference type="FunFam" id="3.40.50.300:FF:000132">
    <property type="entry name" value="Phosphate import ATP-binding protein PstB"/>
    <property type="match status" value="1"/>
</dbReference>
<dbReference type="Gene3D" id="3.40.50.300">
    <property type="entry name" value="P-loop containing nucleotide triphosphate hydrolases"/>
    <property type="match status" value="1"/>
</dbReference>
<dbReference type="InterPro" id="IPR003593">
    <property type="entry name" value="AAA+_ATPase"/>
</dbReference>
<dbReference type="InterPro" id="IPR003439">
    <property type="entry name" value="ABC_transporter-like_ATP-bd"/>
</dbReference>
<dbReference type="InterPro" id="IPR017871">
    <property type="entry name" value="ABC_transporter-like_CS"/>
</dbReference>
<dbReference type="InterPro" id="IPR027417">
    <property type="entry name" value="P-loop_NTPase"/>
</dbReference>
<dbReference type="InterPro" id="IPR005670">
    <property type="entry name" value="PstB-like"/>
</dbReference>
<dbReference type="NCBIfam" id="TIGR00972">
    <property type="entry name" value="3a0107s01c2"/>
    <property type="match status" value="1"/>
</dbReference>
<dbReference type="PANTHER" id="PTHR43423">
    <property type="entry name" value="ABC TRANSPORTER I FAMILY MEMBER 17"/>
    <property type="match status" value="1"/>
</dbReference>
<dbReference type="PANTHER" id="PTHR43423:SF12">
    <property type="entry name" value="IRON EXPORT ATP-BINDING PROTEIN FETA-RELATED"/>
    <property type="match status" value="1"/>
</dbReference>
<dbReference type="Pfam" id="PF00005">
    <property type="entry name" value="ABC_tran"/>
    <property type="match status" value="1"/>
</dbReference>
<dbReference type="SMART" id="SM00382">
    <property type="entry name" value="AAA"/>
    <property type="match status" value="1"/>
</dbReference>
<dbReference type="SUPFAM" id="SSF52540">
    <property type="entry name" value="P-loop containing nucleoside triphosphate hydrolases"/>
    <property type="match status" value="1"/>
</dbReference>
<dbReference type="PROSITE" id="PS00211">
    <property type="entry name" value="ABC_TRANSPORTER_1"/>
    <property type="match status" value="1"/>
</dbReference>
<dbReference type="PROSITE" id="PS50893">
    <property type="entry name" value="ABC_TRANSPORTER_2"/>
    <property type="match status" value="1"/>
</dbReference>
<dbReference type="PROSITE" id="PS51238">
    <property type="entry name" value="PSTB"/>
    <property type="match status" value="1"/>
</dbReference>
<proteinExistence type="inferred from homology"/>
<protein>
    <recommendedName>
        <fullName evidence="1">Phosphate import ATP-binding protein PstB</fullName>
        <ecNumber evidence="1">7.3.2.1</ecNumber>
    </recommendedName>
    <alternativeName>
        <fullName evidence="1">ABC phosphate transporter</fullName>
    </alternativeName>
    <alternativeName>
        <fullName evidence="1">Phosphate-transporting ATPase</fullName>
    </alternativeName>
</protein>
<sequence>MVSTMMNEQQQGGMTHGYNVEALKNKPKSKPGKATDTCLEVSDLQLWYGQDKVLKGVDMEIPRGRITAFIGPSGCGKSTLLRCFNRMNDLIDNCRIEGHIRIDGEDIYDRRVDIPELRRRVGMVFQKPNPFPKSIYENVAYGLRLQGVRNRRVLDEVVERSLKRAALWDEVKDRLHENALGLSGGQQQRLVIARAVAVEPEVLLLDEPASALDPLATLKIEELMFELKEEYTIAIVTHNMQQAARVSDYTAFMYLGELVEFNDTDTLFTTPAKKQTEDYITGRYG</sequence>
<feature type="chain" id="PRO_0000272415" description="Phosphate import ATP-binding protein PstB">
    <location>
        <begin position="1"/>
        <end position="285"/>
    </location>
</feature>
<feature type="domain" description="ABC transporter" evidence="1">
    <location>
        <begin position="39"/>
        <end position="280"/>
    </location>
</feature>
<feature type="binding site" evidence="1">
    <location>
        <begin position="71"/>
        <end position="78"/>
    </location>
    <ligand>
        <name>ATP</name>
        <dbReference type="ChEBI" id="CHEBI:30616"/>
    </ligand>
</feature>
<accession>Q0A9K1</accession>
<evidence type="ECO:0000255" key="1">
    <source>
        <dbReference type="HAMAP-Rule" id="MF_01702"/>
    </source>
</evidence>
<comment type="function">
    <text evidence="1">Part of the ABC transporter complex PstSACB involved in phosphate import. Responsible for energy coupling to the transport system.</text>
</comment>
<comment type="catalytic activity">
    <reaction evidence="1">
        <text>phosphate(out) + ATP + H2O = ADP + 2 phosphate(in) + H(+)</text>
        <dbReference type="Rhea" id="RHEA:24440"/>
        <dbReference type="ChEBI" id="CHEBI:15377"/>
        <dbReference type="ChEBI" id="CHEBI:15378"/>
        <dbReference type="ChEBI" id="CHEBI:30616"/>
        <dbReference type="ChEBI" id="CHEBI:43474"/>
        <dbReference type="ChEBI" id="CHEBI:456216"/>
        <dbReference type="EC" id="7.3.2.1"/>
    </reaction>
</comment>
<comment type="subunit">
    <text evidence="1">The complex is composed of two ATP-binding proteins (PstB), two transmembrane proteins (PstC and PstA) and a solute-binding protein (PstS).</text>
</comment>
<comment type="subcellular location">
    <subcellularLocation>
        <location evidence="1">Cell inner membrane</location>
        <topology evidence="1">Peripheral membrane protein</topology>
    </subcellularLocation>
</comment>
<comment type="similarity">
    <text evidence="1">Belongs to the ABC transporter superfamily. Phosphate importer (TC 3.A.1.7) family.</text>
</comment>
<gene>
    <name evidence="1" type="primary">pstB</name>
    <name type="ordered locus">Mlg_1137</name>
</gene>
<organism>
    <name type="scientific">Alkalilimnicola ehrlichii (strain ATCC BAA-1101 / DSM 17681 / MLHE-1)</name>
    <dbReference type="NCBI Taxonomy" id="187272"/>
    <lineage>
        <taxon>Bacteria</taxon>
        <taxon>Pseudomonadati</taxon>
        <taxon>Pseudomonadota</taxon>
        <taxon>Gammaproteobacteria</taxon>
        <taxon>Chromatiales</taxon>
        <taxon>Ectothiorhodospiraceae</taxon>
        <taxon>Alkalilimnicola</taxon>
    </lineage>
</organism>
<keyword id="KW-0067">ATP-binding</keyword>
<keyword id="KW-0997">Cell inner membrane</keyword>
<keyword id="KW-1003">Cell membrane</keyword>
<keyword id="KW-0472">Membrane</keyword>
<keyword id="KW-0547">Nucleotide-binding</keyword>
<keyword id="KW-0592">Phosphate transport</keyword>
<keyword id="KW-1185">Reference proteome</keyword>
<keyword id="KW-1278">Translocase</keyword>
<keyword id="KW-0813">Transport</keyword>
<reference key="1">
    <citation type="submission" date="2006-08" db="EMBL/GenBank/DDBJ databases">
        <title>Complete sequence of Alkalilimnicola ehrilichei MLHE-1.</title>
        <authorList>
            <person name="Copeland A."/>
            <person name="Lucas S."/>
            <person name="Lapidus A."/>
            <person name="Barry K."/>
            <person name="Detter J.C."/>
            <person name="Glavina del Rio T."/>
            <person name="Hammon N."/>
            <person name="Israni S."/>
            <person name="Dalin E."/>
            <person name="Tice H."/>
            <person name="Pitluck S."/>
            <person name="Sims D."/>
            <person name="Brettin T."/>
            <person name="Bruce D."/>
            <person name="Han C."/>
            <person name="Tapia R."/>
            <person name="Gilna P."/>
            <person name="Schmutz J."/>
            <person name="Larimer F."/>
            <person name="Land M."/>
            <person name="Hauser L."/>
            <person name="Kyrpides N."/>
            <person name="Mikhailova N."/>
            <person name="Oremland R.S."/>
            <person name="Hoeft S.E."/>
            <person name="Switzer-Blum J."/>
            <person name="Kulp T."/>
            <person name="King G."/>
            <person name="Tabita R."/>
            <person name="Witte B."/>
            <person name="Santini J.M."/>
            <person name="Basu P."/>
            <person name="Hollibaugh J.T."/>
            <person name="Xie G."/>
            <person name="Stolz J.F."/>
            <person name="Richardson P."/>
        </authorList>
    </citation>
    <scope>NUCLEOTIDE SEQUENCE [LARGE SCALE GENOMIC DNA]</scope>
    <source>
        <strain>ATCC BAA-1101 / DSM 17681 / MLHE-1</strain>
    </source>
</reference>
<name>PSTB_ALKEH</name>